<dbReference type="EMBL" id="AM040264">
    <property type="protein sequence ID" value="CAJ10304.1"/>
    <property type="molecule type" value="Genomic_DNA"/>
</dbReference>
<dbReference type="RefSeq" id="WP_002963483.1">
    <property type="nucleotide sequence ID" value="NZ_KN046823.1"/>
</dbReference>
<dbReference type="SMR" id="Q2YPJ2"/>
<dbReference type="STRING" id="359391.BAB1_0348"/>
<dbReference type="GeneID" id="97534292"/>
<dbReference type="KEGG" id="bmf:BAB1_0348"/>
<dbReference type="PATRIC" id="fig|359391.11.peg.2393"/>
<dbReference type="HOGENOM" id="CLU_095787_0_1_5"/>
<dbReference type="PhylomeDB" id="Q2YPJ2"/>
<dbReference type="Proteomes" id="UP000002719">
    <property type="component" value="Chromosome I"/>
</dbReference>
<dbReference type="GO" id="GO:0005886">
    <property type="term" value="C:plasma membrane"/>
    <property type="evidence" value="ECO:0007669"/>
    <property type="project" value="UniProtKB-SubCell"/>
</dbReference>
<dbReference type="GO" id="GO:0008381">
    <property type="term" value="F:mechanosensitive monoatomic ion channel activity"/>
    <property type="evidence" value="ECO:0007669"/>
    <property type="project" value="UniProtKB-UniRule"/>
</dbReference>
<dbReference type="Gene3D" id="1.10.1200.120">
    <property type="entry name" value="Large-conductance mechanosensitive channel, MscL, domain 1"/>
    <property type="match status" value="1"/>
</dbReference>
<dbReference type="HAMAP" id="MF_00115">
    <property type="entry name" value="MscL"/>
    <property type="match status" value="1"/>
</dbReference>
<dbReference type="InterPro" id="IPR019823">
    <property type="entry name" value="Mechanosensitive_channel_CS"/>
</dbReference>
<dbReference type="InterPro" id="IPR001185">
    <property type="entry name" value="MS_channel"/>
</dbReference>
<dbReference type="InterPro" id="IPR037673">
    <property type="entry name" value="MSC/AndL"/>
</dbReference>
<dbReference type="InterPro" id="IPR036019">
    <property type="entry name" value="MscL_channel"/>
</dbReference>
<dbReference type="NCBIfam" id="TIGR00220">
    <property type="entry name" value="mscL"/>
    <property type="match status" value="1"/>
</dbReference>
<dbReference type="NCBIfam" id="NF001843">
    <property type="entry name" value="PRK00567.1-4"/>
    <property type="match status" value="1"/>
</dbReference>
<dbReference type="NCBIfam" id="NF010557">
    <property type="entry name" value="PRK13952.1"/>
    <property type="match status" value="1"/>
</dbReference>
<dbReference type="PANTHER" id="PTHR30266:SF2">
    <property type="entry name" value="LARGE-CONDUCTANCE MECHANOSENSITIVE CHANNEL"/>
    <property type="match status" value="1"/>
</dbReference>
<dbReference type="PANTHER" id="PTHR30266">
    <property type="entry name" value="MECHANOSENSITIVE CHANNEL MSCL"/>
    <property type="match status" value="1"/>
</dbReference>
<dbReference type="Pfam" id="PF01741">
    <property type="entry name" value="MscL"/>
    <property type="match status" value="1"/>
</dbReference>
<dbReference type="PRINTS" id="PR01264">
    <property type="entry name" value="MECHCHANNEL"/>
</dbReference>
<dbReference type="SUPFAM" id="SSF81330">
    <property type="entry name" value="Gated mechanosensitive channel"/>
    <property type="match status" value="1"/>
</dbReference>
<dbReference type="PROSITE" id="PS01327">
    <property type="entry name" value="MSCL"/>
    <property type="match status" value="1"/>
</dbReference>
<keyword id="KW-0997">Cell inner membrane</keyword>
<keyword id="KW-1003">Cell membrane</keyword>
<keyword id="KW-0407">Ion channel</keyword>
<keyword id="KW-0406">Ion transport</keyword>
<keyword id="KW-0472">Membrane</keyword>
<keyword id="KW-1185">Reference proteome</keyword>
<keyword id="KW-0812">Transmembrane</keyword>
<keyword id="KW-1133">Transmembrane helix</keyword>
<keyword id="KW-0813">Transport</keyword>
<gene>
    <name evidence="1" type="primary">mscL</name>
    <name type="ordered locus">BAB1_0348</name>
</gene>
<feature type="chain" id="PRO_0000237985" description="Large-conductance mechanosensitive channel">
    <location>
        <begin position="1"/>
        <end position="138"/>
    </location>
</feature>
<feature type="transmembrane region" description="Helical" evidence="1">
    <location>
        <begin position="15"/>
        <end position="35"/>
    </location>
</feature>
<feature type="transmembrane region" description="Helical" evidence="1">
    <location>
        <begin position="38"/>
        <end position="58"/>
    </location>
</feature>
<feature type="transmembrane region" description="Helical" evidence="1">
    <location>
        <begin position="80"/>
        <end position="100"/>
    </location>
</feature>
<protein>
    <recommendedName>
        <fullName evidence="1">Large-conductance mechanosensitive channel</fullName>
    </recommendedName>
</protein>
<reference key="1">
    <citation type="journal article" date="2005" name="Infect. Immun.">
        <title>Whole-genome analyses of speciation events in pathogenic Brucellae.</title>
        <authorList>
            <person name="Chain P.S."/>
            <person name="Comerci D.J."/>
            <person name="Tolmasky M.E."/>
            <person name="Larimer F.W."/>
            <person name="Malfatti S.A."/>
            <person name="Vergez L.M."/>
            <person name="Aguero F."/>
            <person name="Land M.L."/>
            <person name="Ugalde R.A."/>
            <person name="Garcia E."/>
        </authorList>
    </citation>
    <scope>NUCLEOTIDE SEQUENCE [LARGE SCALE GENOMIC DNA]</scope>
    <source>
        <strain>2308</strain>
    </source>
</reference>
<proteinExistence type="inferred from homology"/>
<comment type="function">
    <text evidence="1">Channel that opens in response to stretch forces in the membrane lipid bilayer. May participate in the regulation of osmotic pressure changes within the cell.</text>
</comment>
<comment type="subunit">
    <text evidence="1">Homopentamer.</text>
</comment>
<comment type="subcellular location">
    <subcellularLocation>
        <location evidence="1">Cell inner membrane</location>
        <topology evidence="1">Multi-pass membrane protein</topology>
    </subcellularLocation>
</comment>
<comment type="similarity">
    <text evidence="1">Belongs to the MscL family.</text>
</comment>
<organism>
    <name type="scientific">Brucella abortus (strain 2308)</name>
    <dbReference type="NCBI Taxonomy" id="359391"/>
    <lineage>
        <taxon>Bacteria</taxon>
        <taxon>Pseudomonadati</taxon>
        <taxon>Pseudomonadota</taxon>
        <taxon>Alphaproteobacteria</taxon>
        <taxon>Hyphomicrobiales</taxon>
        <taxon>Brucellaceae</taxon>
        <taxon>Brucella/Ochrobactrum group</taxon>
        <taxon>Brucella</taxon>
    </lineage>
</organism>
<evidence type="ECO:0000255" key="1">
    <source>
        <dbReference type="HAMAP-Rule" id="MF_00115"/>
    </source>
</evidence>
<sequence>MLKEFQEFALKGNMVDLAIGVIIGGAFGGLVNSIVNDIIMPIIGLITGGIDFSNMFIQLAGDPKTTLAAAREAGATIAYGNFITLLINFLIIAWVLFLVVKLMNRLKKREEAKPAPAAPSEEVLLTEIRDILAKQQKA</sequence>
<accession>Q2YPJ2</accession>
<name>MSCL_BRUA2</name>